<sequence length="213" mass="24009">MKLEGRRIKGLYLVTEDYSRKNFFNIIEEAIIGGVDIVQYRDKSNPRSVRLDVARKVKQICNRYDILFFIDDDVQLAIEVQADGVHIGKDDMPLPDARRIFDGLIGYSTYGDREMAIFAEKNGADYVAFGPFFHTDTKKDADVYDIHVLEGIHKYIRIPVFVIGGINISNIRTFSGYGIDGVAVVSAIFSDPDPERAARELKAALYNYVLSSA</sequence>
<reference key="1">
    <citation type="journal article" date="2000" name="Nature">
        <title>The genome sequence of the thermoacidophilic scavenger Thermoplasma acidophilum.</title>
        <authorList>
            <person name="Ruepp A."/>
            <person name="Graml W."/>
            <person name="Santos-Martinez M.-L."/>
            <person name="Koretke K.K."/>
            <person name="Volker C."/>
            <person name="Mewes H.-W."/>
            <person name="Frishman D."/>
            <person name="Stocker S."/>
            <person name="Lupas A.N."/>
            <person name="Baumeister W."/>
        </authorList>
    </citation>
    <scope>NUCLEOTIDE SEQUENCE [LARGE SCALE GENOMIC DNA]</scope>
    <source>
        <strain>ATCC 25905 / DSM 1728 / JCM 9062 / NBRC 15155 / AMRC-C165</strain>
    </source>
</reference>
<dbReference type="EC" id="2.5.1.3" evidence="1"/>
<dbReference type="EMBL" id="AL445067">
    <property type="protein sequence ID" value="CAC12401.1"/>
    <property type="molecule type" value="Genomic_DNA"/>
</dbReference>
<dbReference type="RefSeq" id="WP_010901685.1">
    <property type="nucleotide sequence ID" value="NC_002578.1"/>
</dbReference>
<dbReference type="SMR" id="Q9HIQ4"/>
<dbReference type="STRING" id="273075.gene:9572501"/>
<dbReference type="PaxDb" id="273075-Ta1277"/>
<dbReference type="EnsemblBacteria" id="CAC12401">
    <property type="protein sequence ID" value="CAC12401"/>
    <property type="gene ID" value="CAC12401"/>
</dbReference>
<dbReference type="KEGG" id="tac:Ta1277"/>
<dbReference type="eggNOG" id="arCOG01089">
    <property type="taxonomic scope" value="Archaea"/>
</dbReference>
<dbReference type="HOGENOM" id="CLU_018272_3_2_2"/>
<dbReference type="InParanoid" id="Q9HIQ4"/>
<dbReference type="OrthoDB" id="85572at2157"/>
<dbReference type="UniPathway" id="UPA00060">
    <property type="reaction ID" value="UER00141"/>
</dbReference>
<dbReference type="Proteomes" id="UP000001024">
    <property type="component" value="Chromosome"/>
</dbReference>
<dbReference type="GO" id="GO:0005737">
    <property type="term" value="C:cytoplasm"/>
    <property type="evidence" value="ECO:0007669"/>
    <property type="project" value="TreeGrafter"/>
</dbReference>
<dbReference type="GO" id="GO:0000287">
    <property type="term" value="F:magnesium ion binding"/>
    <property type="evidence" value="ECO:0007669"/>
    <property type="project" value="UniProtKB-UniRule"/>
</dbReference>
<dbReference type="GO" id="GO:0004789">
    <property type="term" value="F:thiamine-phosphate diphosphorylase activity"/>
    <property type="evidence" value="ECO:0007669"/>
    <property type="project" value="UniProtKB-UniRule"/>
</dbReference>
<dbReference type="GO" id="GO:0009228">
    <property type="term" value="P:thiamine biosynthetic process"/>
    <property type="evidence" value="ECO:0007669"/>
    <property type="project" value="UniProtKB-KW"/>
</dbReference>
<dbReference type="GO" id="GO:0009229">
    <property type="term" value="P:thiamine diphosphate biosynthetic process"/>
    <property type="evidence" value="ECO:0007669"/>
    <property type="project" value="UniProtKB-UniRule"/>
</dbReference>
<dbReference type="CDD" id="cd00564">
    <property type="entry name" value="TMP_TenI"/>
    <property type="match status" value="1"/>
</dbReference>
<dbReference type="FunFam" id="3.20.20.70:FF:000096">
    <property type="entry name" value="Thiamine-phosphate synthase"/>
    <property type="match status" value="1"/>
</dbReference>
<dbReference type="Gene3D" id="3.20.20.70">
    <property type="entry name" value="Aldolase class I"/>
    <property type="match status" value="1"/>
</dbReference>
<dbReference type="HAMAP" id="MF_00097">
    <property type="entry name" value="TMP_synthase"/>
    <property type="match status" value="1"/>
</dbReference>
<dbReference type="InterPro" id="IPR013785">
    <property type="entry name" value="Aldolase_TIM"/>
</dbReference>
<dbReference type="InterPro" id="IPR036206">
    <property type="entry name" value="ThiamineP_synth_sf"/>
</dbReference>
<dbReference type="InterPro" id="IPR022998">
    <property type="entry name" value="ThiamineP_synth_TenI"/>
</dbReference>
<dbReference type="InterPro" id="IPR034291">
    <property type="entry name" value="TMP_synthase"/>
</dbReference>
<dbReference type="NCBIfam" id="TIGR00693">
    <property type="entry name" value="thiE"/>
    <property type="match status" value="1"/>
</dbReference>
<dbReference type="PANTHER" id="PTHR20857:SF23">
    <property type="entry name" value="THIAMINE BIOSYNTHETIC BIFUNCTIONAL ENZYME"/>
    <property type="match status" value="1"/>
</dbReference>
<dbReference type="PANTHER" id="PTHR20857">
    <property type="entry name" value="THIAMINE-PHOSPHATE PYROPHOSPHORYLASE"/>
    <property type="match status" value="1"/>
</dbReference>
<dbReference type="Pfam" id="PF02581">
    <property type="entry name" value="TMP-TENI"/>
    <property type="match status" value="1"/>
</dbReference>
<dbReference type="SUPFAM" id="SSF51391">
    <property type="entry name" value="Thiamin phosphate synthase"/>
    <property type="match status" value="1"/>
</dbReference>
<feature type="chain" id="PRO_0000157076" description="Thiamine-phosphate synthase">
    <location>
        <begin position="1"/>
        <end position="213"/>
    </location>
</feature>
<feature type="binding site" evidence="1">
    <location>
        <begin position="39"/>
        <end position="43"/>
    </location>
    <ligand>
        <name>4-amino-2-methyl-5-(diphosphooxymethyl)pyrimidine</name>
        <dbReference type="ChEBI" id="CHEBI:57841"/>
    </ligand>
</feature>
<feature type="binding site" evidence="1">
    <location>
        <position position="71"/>
    </location>
    <ligand>
        <name>4-amino-2-methyl-5-(diphosphooxymethyl)pyrimidine</name>
        <dbReference type="ChEBI" id="CHEBI:57841"/>
    </ligand>
</feature>
<feature type="binding site" evidence="1">
    <location>
        <position position="72"/>
    </location>
    <ligand>
        <name>Mg(2+)</name>
        <dbReference type="ChEBI" id="CHEBI:18420"/>
    </ligand>
</feature>
<feature type="binding site" evidence="1">
    <location>
        <position position="91"/>
    </location>
    <ligand>
        <name>Mg(2+)</name>
        <dbReference type="ChEBI" id="CHEBI:18420"/>
    </ligand>
</feature>
<feature type="binding site" evidence="1">
    <location>
        <position position="108"/>
    </location>
    <ligand>
        <name>4-amino-2-methyl-5-(diphosphooxymethyl)pyrimidine</name>
        <dbReference type="ChEBI" id="CHEBI:57841"/>
    </ligand>
</feature>
<feature type="binding site" evidence="1">
    <location>
        <begin position="135"/>
        <end position="137"/>
    </location>
    <ligand>
        <name>2-[(2R,5Z)-2-carboxy-4-methylthiazol-5(2H)-ylidene]ethyl phosphate</name>
        <dbReference type="ChEBI" id="CHEBI:62899"/>
    </ligand>
</feature>
<feature type="binding site" evidence="1">
    <location>
        <position position="138"/>
    </location>
    <ligand>
        <name>4-amino-2-methyl-5-(diphosphooxymethyl)pyrimidine</name>
        <dbReference type="ChEBI" id="CHEBI:57841"/>
    </ligand>
</feature>
<feature type="binding site" evidence="1">
    <location>
        <position position="165"/>
    </location>
    <ligand>
        <name>2-[(2R,5Z)-2-carboxy-4-methylthiazol-5(2H)-ylidene]ethyl phosphate</name>
        <dbReference type="ChEBI" id="CHEBI:62899"/>
    </ligand>
</feature>
<feature type="binding site" evidence="1">
    <location>
        <begin position="185"/>
        <end position="186"/>
    </location>
    <ligand>
        <name>2-[(2R,5Z)-2-carboxy-4-methylthiazol-5(2H)-ylidene]ethyl phosphate</name>
        <dbReference type="ChEBI" id="CHEBI:62899"/>
    </ligand>
</feature>
<gene>
    <name evidence="1" type="primary">thiE</name>
    <name type="ordered locus">Ta1277</name>
</gene>
<proteinExistence type="inferred from homology"/>
<evidence type="ECO:0000255" key="1">
    <source>
        <dbReference type="HAMAP-Rule" id="MF_00097"/>
    </source>
</evidence>
<comment type="function">
    <text evidence="1">Condenses 4-methyl-5-(beta-hydroxyethyl)thiazole monophosphate (THZ-P) and 2-methyl-4-amino-5-hydroxymethyl pyrimidine pyrophosphate (HMP-PP) to form thiamine monophosphate (TMP).</text>
</comment>
<comment type="catalytic activity">
    <reaction evidence="1">
        <text>2-[(2R,5Z)-2-carboxy-4-methylthiazol-5(2H)-ylidene]ethyl phosphate + 4-amino-2-methyl-5-(diphosphooxymethyl)pyrimidine + 2 H(+) = thiamine phosphate + CO2 + diphosphate</text>
        <dbReference type="Rhea" id="RHEA:47844"/>
        <dbReference type="ChEBI" id="CHEBI:15378"/>
        <dbReference type="ChEBI" id="CHEBI:16526"/>
        <dbReference type="ChEBI" id="CHEBI:33019"/>
        <dbReference type="ChEBI" id="CHEBI:37575"/>
        <dbReference type="ChEBI" id="CHEBI:57841"/>
        <dbReference type="ChEBI" id="CHEBI:62899"/>
        <dbReference type="EC" id="2.5.1.3"/>
    </reaction>
</comment>
<comment type="catalytic activity">
    <reaction evidence="1">
        <text>2-(2-carboxy-4-methylthiazol-5-yl)ethyl phosphate + 4-amino-2-methyl-5-(diphosphooxymethyl)pyrimidine + 2 H(+) = thiamine phosphate + CO2 + diphosphate</text>
        <dbReference type="Rhea" id="RHEA:47848"/>
        <dbReference type="ChEBI" id="CHEBI:15378"/>
        <dbReference type="ChEBI" id="CHEBI:16526"/>
        <dbReference type="ChEBI" id="CHEBI:33019"/>
        <dbReference type="ChEBI" id="CHEBI:37575"/>
        <dbReference type="ChEBI" id="CHEBI:57841"/>
        <dbReference type="ChEBI" id="CHEBI:62890"/>
        <dbReference type="EC" id="2.5.1.3"/>
    </reaction>
</comment>
<comment type="catalytic activity">
    <reaction evidence="1">
        <text>4-methyl-5-(2-phosphooxyethyl)-thiazole + 4-amino-2-methyl-5-(diphosphooxymethyl)pyrimidine + H(+) = thiamine phosphate + diphosphate</text>
        <dbReference type="Rhea" id="RHEA:22328"/>
        <dbReference type="ChEBI" id="CHEBI:15378"/>
        <dbReference type="ChEBI" id="CHEBI:33019"/>
        <dbReference type="ChEBI" id="CHEBI:37575"/>
        <dbReference type="ChEBI" id="CHEBI:57841"/>
        <dbReference type="ChEBI" id="CHEBI:58296"/>
        <dbReference type="EC" id="2.5.1.3"/>
    </reaction>
</comment>
<comment type="cofactor">
    <cofactor evidence="1">
        <name>Mg(2+)</name>
        <dbReference type="ChEBI" id="CHEBI:18420"/>
    </cofactor>
    <text evidence="1">Binds 1 Mg(2+) ion per subunit.</text>
</comment>
<comment type="pathway">
    <text evidence="1">Cofactor biosynthesis; thiamine diphosphate biosynthesis; thiamine phosphate from 4-amino-2-methyl-5-diphosphomethylpyrimidine and 4-methyl-5-(2-phosphoethyl)-thiazole: step 1/1.</text>
</comment>
<comment type="similarity">
    <text evidence="1">Belongs to the thiamine-phosphate synthase family.</text>
</comment>
<name>THIE_THEAC</name>
<protein>
    <recommendedName>
        <fullName evidence="1">Thiamine-phosphate synthase</fullName>
        <shortName evidence="1">TP synthase</shortName>
        <shortName evidence="1">TPS</shortName>
        <ecNumber evidence="1">2.5.1.3</ecNumber>
    </recommendedName>
    <alternativeName>
        <fullName evidence="1">Thiamine-phosphate pyrophosphorylase</fullName>
        <shortName evidence="1">TMP pyrophosphorylase</shortName>
        <shortName evidence="1">TMP-PPase</shortName>
    </alternativeName>
</protein>
<keyword id="KW-0460">Magnesium</keyword>
<keyword id="KW-0479">Metal-binding</keyword>
<keyword id="KW-1185">Reference proteome</keyword>
<keyword id="KW-0784">Thiamine biosynthesis</keyword>
<keyword id="KW-0808">Transferase</keyword>
<organism>
    <name type="scientific">Thermoplasma acidophilum (strain ATCC 25905 / DSM 1728 / JCM 9062 / NBRC 15155 / AMRC-C165)</name>
    <dbReference type="NCBI Taxonomy" id="273075"/>
    <lineage>
        <taxon>Archaea</taxon>
        <taxon>Methanobacteriati</taxon>
        <taxon>Thermoplasmatota</taxon>
        <taxon>Thermoplasmata</taxon>
        <taxon>Thermoplasmatales</taxon>
        <taxon>Thermoplasmataceae</taxon>
        <taxon>Thermoplasma</taxon>
    </lineage>
</organism>
<accession>Q9HIQ4</accession>